<feature type="chain" id="PRO_0000169017" description="Multifunctional Ser/Thr-tRNA deacylase ProXp-y">
    <location>
        <begin position="1"/>
        <end position="167"/>
    </location>
</feature>
<evidence type="ECO:0000269" key="1">
    <source>
    </source>
</evidence>
<evidence type="ECO:0000303" key="2">
    <source>
    </source>
</evidence>
<evidence type="ECO:0000305" key="3"/>
<sequence>MTEMAKGSVTHQRLIALLSQEGADFRVVTHEAVGKCEAVSEIRGTALGQGAKALVCKVKGNGVNQHVLAILAADQQADLSQLASHIGGLRASLASPAEVDELTGCVFGAIPPFSFHPKLKLVADPLLFERFDEIAFNAGMLDKSVILKTADYLRIAQPELVNFRRTA</sequence>
<accession>P64483</accession>
<accession>P76238</accession>
<accession>Q2MB30</accession>
<protein>
    <recommendedName>
        <fullName evidence="2">Multifunctional Ser/Thr-tRNA deacylase ProXp-y</fullName>
        <ecNumber evidence="1">3.1.1.-</ecNumber>
    </recommendedName>
    <alternativeName>
        <fullName evidence="2">Free-standing editing domain ProXp-y</fullName>
    </alternativeName>
    <alternativeName>
        <fullName evidence="2">Homologous trans-editing factor ProXp-y</fullName>
    </alternativeName>
    <alternativeName>
        <fullName evidence="2">ProXp-ST1</fullName>
    </alternativeName>
    <alternativeName>
        <fullName evidence="2">Prolyl-tRNA synthetase insertion domain homolog ProXp-y</fullName>
        <shortName evidence="2">ProRS INS domain homolog ProXp-y</shortName>
    </alternativeName>
</protein>
<comment type="function">
    <text evidence="1">An aminoacyl-tRNA editing enzyme that deacylates Ser-tRNA and/or Thr-tRNA mischarged by lysyl-tRNA synthetase (LysRS), threonyl-tRNA synthetase (ThrRS), seryl-tRNA synthetase (SerRS), alanyl-tRNA synthetase (AlaRS), valyl-tRNA synthetase (ValRS) and isoleucyl-tRNA synthetase (IleRS) in vitro. Also deacylates mischarged Hse-tRNA(Lys) and Hse-tRNA(Ser), and cognate Ser-tRNA(Ser) and Thr-tRNA(Thr) in vitro. The presence of cognate ThrRS abolishes the Thr-tRNA(Thr) deacylase activity, hence this activity is not applicable physiologically. Not able to remove the amino acid moiety from cognate Val-tRNA(Val), Ile-tRNA(Ile), Lys-tRNA(Lys), Ala-tRNA(Ala) or Pro-tRNA(Pro), or from incorrectly charged Ala-tRNA(Pro), Cys-tRNA(Pro) or Leu-tRNA(Pro) in vitro. May be required in vivo to prevent mistranslation and to maintain growth when the error prone stress-inducible lysyl-tRNA synthetase (LysU) is expressed under environmental pressure.</text>
</comment>
<comment type="catalytic activity">
    <reaction evidence="1">
        <text>L-seryl-tRNA(Lys) + H2O = tRNA(Lys) + L-serine</text>
        <dbReference type="Rhea" id="RHEA:74215"/>
        <dbReference type="Rhea" id="RHEA-COMP:9697"/>
        <dbReference type="Rhea" id="RHEA-COMP:18345"/>
        <dbReference type="ChEBI" id="CHEBI:15377"/>
        <dbReference type="ChEBI" id="CHEBI:33384"/>
        <dbReference type="ChEBI" id="CHEBI:78442"/>
        <dbReference type="ChEBI" id="CHEBI:78533"/>
    </reaction>
    <physiologicalReaction direction="left-to-right" evidence="1">
        <dbReference type="Rhea" id="RHEA:74216"/>
    </physiologicalReaction>
</comment>
<comment type="catalytic activity">
    <reaction evidence="1">
        <text>L-threonyl-tRNA(Lys) + H2O = tRNA(Lys) + L-threonine</text>
        <dbReference type="Rhea" id="RHEA:74211"/>
        <dbReference type="Rhea" id="RHEA-COMP:9697"/>
        <dbReference type="Rhea" id="RHEA-COMP:18344"/>
        <dbReference type="ChEBI" id="CHEBI:15377"/>
        <dbReference type="ChEBI" id="CHEBI:57926"/>
        <dbReference type="ChEBI" id="CHEBI:78442"/>
        <dbReference type="ChEBI" id="CHEBI:78534"/>
    </reaction>
    <physiologicalReaction direction="left-to-right" evidence="1">
        <dbReference type="Rhea" id="RHEA:74212"/>
    </physiologicalReaction>
</comment>
<comment type="catalytic activity">
    <reaction evidence="1">
        <text>L-homoseryl-tRNA(Lys) + H2O = tRNA(Lys) + L-homoserine + H(+)</text>
        <dbReference type="Rhea" id="RHEA:74259"/>
        <dbReference type="Rhea" id="RHEA-COMP:9697"/>
        <dbReference type="Rhea" id="RHEA-COMP:18356"/>
        <dbReference type="ChEBI" id="CHEBI:15377"/>
        <dbReference type="ChEBI" id="CHEBI:15378"/>
        <dbReference type="ChEBI" id="CHEBI:57476"/>
        <dbReference type="ChEBI" id="CHEBI:78442"/>
        <dbReference type="ChEBI" id="CHEBI:193130"/>
    </reaction>
    <physiologicalReaction direction="left-to-right" evidence="1">
        <dbReference type="Rhea" id="RHEA:74260"/>
    </physiologicalReaction>
</comment>
<comment type="catalytic activity">
    <reaction evidence="1">
        <text>L-seryl-tRNA(Ala) + H2O = tRNA(Ala) + L-serine</text>
        <dbReference type="Rhea" id="RHEA:74223"/>
        <dbReference type="Rhea" id="RHEA-COMP:9657"/>
        <dbReference type="Rhea" id="RHEA-COMP:18347"/>
        <dbReference type="ChEBI" id="CHEBI:15377"/>
        <dbReference type="ChEBI" id="CHEBI:33384"/>
        <dbReference type="ChEBI" id="CHEBI:78442"/>
        <dbReference type="ChEBI" id="CHEBI:78533"/>
    </reaction>
    <physiologicalReaction direction="left-to-right" evidence="1">
        <dbReference type="Rhea" id="RHEA:74224"/>
    </physiologicalReaction>
</comment>
<comment type="catalytic activity">
    <reaction evidence="1">
        <text>L-homoseryl-tRNA(Ser) + H2O = tRNA(Ser) + L-homoserine + H(+)</text>
        <dbReference type="Rhea" id="RHEA:74255"/>
        <dbReference type="Rhea" id="RHEA-COMP:9669"/>
        <dbReference type="Rhea" id="RHEA-COMP:18355"/>
        <dbReference type="ChEBI" id="CHEBI:15377"/>
        <dbReference type="ChEBI" id="CHEBI:15378"/>
        <dbReference type="ChEBI" id="CHEBI:57476"/>
        <dbReference type="ChEBI" id="CHEBI:78442"/>
        <dbReference type="ChEBI" id="CHEBI:193130"/>
    </reaction>
    <physiologicalReaction direction="left-to-right" evidence="1">
        <dbReference type="Rhea" id="RHEA:74256"/>
    </physiologicalReaction>
</comment>
<comment type="catalytic activity">
    <reaction evidence="1">
        <text>L-seryl-tRNA(Thr) + H2O = tRNA(Thr) + L-serine</text>
        <dbReference type="Rhea" id="RHEA:74219"/>
        <dbReference type="Rhea" id="RHEA-COMP:9670"/>
        <dbReference type="Rhea" id="RHEA-COMP:18346"/>
        <dbReference type="ChEBI" id="CHEBI:15377"/>
        <dbReference type="ChEBI" id="CHEBI:33384"/>
        <dbReference type="ChEBI" id="CHEBI:78442"/>
        <dbReference type="ChEBI" id="CHEBI:78533"/>
    </reaction>
    <physiologicalReaction direction="left-to-right" evidence="1">
        <dbReference type="Rhea" id="RHEA:74220"/>
    </physiologicalReaction>
</comment>
<comment type="catalytic activity">
    <reaction evidence="1">
        <text>L-threonyl-tRNA(Ile) + H2O = tRNA(Ile) + L-threonine</text>
        <dbReference type="Rhea" id="RHEA:74227"/>
        <dbReference type="Rhea" id="RHEA-COMP:9666"/>
        <dbReference type="Rhea" id="RHEA-COMP:18348"/>
        <dbReference type="ChEBI" id="CHEBI:15377"/>
        <dbReference type="ChEBI" id="CHEBI:57926"/>
        <dbReference type="ChEBI" id="CHEBI:78442"/>
        <dbReference type="ChEBI" id="CHEBI:78534"/>
    </reaction>
    <physiologicalReaction direction="left-to-right" evidence="1">
        <dbReference type="Rhea" id="RHEA:74228"/>
    </physiologicalReaction>
</comment>
<comment type="catalytic activity">
    <reaction evidence="1">
        <text>L-threonyl-tRNA(Val) + H2O = tRNA(Val) + L-threonine</text>
        <dbReference type="Rhea" id="RHEA:74231"/>
        <dbReference type="Rhea" id="RHEA-COMP:9672"/>
        <dbReference type="Rhea" id="RHEA-COMP:18349"/>
        <dbReference type="ChEBI" id="CHEBI:15377"/>
        <dbReference type="ChEBI" id="CHEBI:57926"/>
        <dbReference type="ChEBI" id="CHEBI:78442"/>
        <dbReference type="ChEBI" id="CHEBI:78534"/>
    </reaction>
    <physiologicalReaction direction="left-to-right" evidence="1">
        <dbReference type="Rhea" id="RHEA:74232"/>
    </physiologicalReaction>
</comment>
<comment type="catalytic activity">
    <reaction evidence="1">
        <text>L-threonyl-tRNA(Ser) + H2O = tRNA(Ser) + L-threonine</text>
        <dbReference type="Rhea" id="RHEA:74235"/>
        <dbReference type="Rhea" id="RHEA-COMP:9669"/>
        <dbReference type="Rhea" id="RHEA-COMP:18350"/>
        <dbReference type="ChEBI" id="CHEBI:15377"/>
        <dbReference type="ChEBI" id="CHEBI:57926"/>
        <dbReference type="ChEBI" id="CHEBI:78442"/>
        <dbReference type="ChEBI" id="CHEBI:78534"/>
    </reaction>
    <physiologicalReaction direction="left-to-right" evidence="1">
        <dbReference type="Rhea" id="RHEA:74236"/>
    </physiologicalReaction>
</comment>
<comment type="catalytic activity">
    <reaction evidence="1">
        <text>L-seryl-tRNA(Ser) + H2O = tRNA(Ser) + L-serine</text>
        <dbReference type="Rhea" id="RHEA:74551"/>
        <dbReference type="Rhea" id="RHEA-COMP:9669"/>
        <dbReference type="Rhea" id="RHEA-COMP:9703"/>
        <dbReference type="ChEBI" id="CHEBI:15377"/>
        <dbReference type="ChEBI" id="CHEBI:33384"/>
        <dbReference type="ChEBI" id="CHEBI:78442"/>
        <dbReference type="ChEBI" id="CHEBI:78533"/>
    </reaction>
    <physiologicalReaction direction="left-to-right" evidence="1">
        <dbReference type="Rhea" id="RHEA:74552"/>
    </physiologicalReaction>
</comment>
<comment type="subcellular location">
    <subcellularLocation>
        <location evidence="3">Cytoplasm</location>
    </subcellularLocation>
</comment>
<comment type="disruption phenotype">
    <text evidence="1">Growth defects with elevated alanyl-tRNA synthetase (AlaRS) or stress-inducible lysyl-tRNA synthetase (LysU) levels in the presence of excess Ser, and with elevated LysU or constitutive lysyl-tRNA synthetase (LysS) levels in the presence of excess Thr. Excess homoserine with elevated LysS, LysU or seryl-tRNA synthetase (SerRS) levels also leads to growth defect. Growth defects with LysU overexpression are much more pronounced than with LysS overexpression. Reduced sensitivity to aminoglycoside antibiotics neomycin, streptomycin and kanamycin.</text>
</comment>
<dbReference type="EC" id="3.1.1.-" evidence="1"/>
<dbReference type="EMBL" id="U00096">
    <property type="protein sequence ID" value="AAC74857.1"/>
    <property type="molecule type" value="Genomic_DNA"/>
</dbReference>
<dbReference type="EMBL" id="AP009048">
    <property type="protein sequence ID" value="BAE76526.1"/>
    <property type="molecule type" value="Genomic_DNA"/>
</dbReference>
<dbReference type="PIR" id="C64939">
    <property type="entry name" value="C64939"/>
</dbReference>
<dbReference type="RefSeq" id="NP_416301.1">
    <property type="nucleotide sequence ID" value="NC_000913.3"/>
</dbReference>
<dbReference type="RefSeq" id="WP_000138043.1">
    <property type="nucleotide sequence ID" value="NZ_SSZK01000001.1"/>
</dbReference>
<dbReference type="SMR" id="P64483"/>
<dbReference type="BioGRID" id="4260323">
    <property type="interactions" value="28"/>
</dbReference>
<dbReference type="BioGRID" id="850660">
    <property type="interactions" value="1"/>
</dbReference>
<dbReference type="DIP" id="DIP-48168N"/>
<dbReference type="FunCoup" id="P64483">
    <property type="interactions" value="35"/>
</dbReference>
<dbReference type="IntAct" id="P64483">
    <property type="interactions" value="13"/>
</dbReference>
<dbReference type="STRING" id="511145.b1787"/>
<dbReference type="jPOST" id="P64483"/>
<dbReference type="PaxDb" id="511145-b1787"/>
<dbReference type="EnsemblBacteria" id="AAC74857">
    <property type="protein sequence ID" value="AAC74857"/>
    <property type="gene ID" value="b1787"/>
</dbReference>
<dbReference type="GeneID" id="946303"/>
<dbReference type="KEGG" id="ecj:JW1776"/>
<dbReference type="KEGG" id="eco:b1787"/>
<dbReference type="KEGG" id="ecoc:C3026_10190"/>
<dbReference type="PATRIC" id="fig|511145.12.peg.1860"/>
<dbReference type="EchoBASE" id="EB3270"/>
<dbReference type="eggNOG" id="COG2606">
    <property type="taxonomic scope" value="Bacteria"/>
</dbReference>
<dbReference type="HOGENOM" id="CLU_094875_2_2_6"/>
<dbReference type="InParanoid" id="P64483"/>
<dbReference type="OMA" id="AKAMLCT"/>
<dbReference type="OrthoDB" id="5524888at2"/>
<dbReference type="PhylomeDB" id="P64483"/>
<dbReference type="BioCyc" id="EcoCyc:G6973-MONOMER"/>
<dbReference type="PRO" id="PR:P64483"/>
<dbReference type="Proteomes" id="UP000000625">
    <property type="component" value="Chromosome"/>
</dbReference>
<dbReference type="GO" id="GO:0005737">
    <property type="term" value="C:cytoplasm"/>
    <property type="evidence" value="ECO:0000305"/>
    <property type="project" value="UniProtKB"/>
</dbReference>
<dbReference type="GO" id="GO:0002161">
    <property type="term" value="F:aminoacyl-tRNA deacylase activity"/>
    <property type="evidence" value="ECO:0000314"/>
    <property type="project" value="UniProtKB"/>
</dbReference>
<dbReference type="GO" id="GO:0016787">
    <property type="term" value="F:hydrolase activity"/>
    <property type="evidence" value="ECO:0007669"/>
    <property type="project" value="UniProtKB-KW"/>
</dbReference>
<dbReference type="GO" id="GO:0002196">
    <property type="term" value="F:Ser-tRNA(Ala) deacylase activity"/>
    <property type="evidence" value="ECO:0000314"/>
    <property type="project" value="UniProtKB"/>
</dbReference>
<dbReference type="GO" id="GO:0000049">
    <property type="term" value="F:tRNA binding"/>
    <property type="evidence" value="ECO:0007669"/>
    <property type="project" value="UniProtKB-KW"/>
</dbReference>
<dbReference type="GO" id="GO:0106074">
    <property type="term" value="P:aminoacyl-tRNA metabolism involved in translational fidelity"/>
    <property type="evidence" value="ECO:0000314"/>
    <property type="project" value="EcoCyc"/>
</dbReference>
<dbReference type="GO" id="GO:0045903">
    <property type="term" value="P:positive regulation of translational fidelity"/>
    <property type="evidence" value="ECO:0000314"/>
    <property type="project" value="UniProtKB"/>
</dbReference>
<dbReference type="CDD" id="cd04336">
    <property type="entry name" value="YeaK"/>
    <property type="match status" value="1"/>
</dbReference>
<dbReference type="FunFam" id="3.90.960.10:FF:000003">
    <property type="entry name" value="YbaK / prolyl-tRNA synthetases associated domain protein"/>
    <property type="match status" value="1"/>
</dbReference>
<dbReference type="Gene3D" id="3.90.960.10">
    <property type="entry name" value="YbaK/aminoacyl-tRNA synthetase-associated domain"/>
    <property type="match status" value="1"/>
</dbReference>
<dbReference type="InterPro" id="IPR044786">
    <property type="entry name" value="PROXY"/>
</dbReference>
<dbReference type="InterPro" id="IPR036754">
    <property type="entry name" value="YbaK/aa-tRNA-synt-asso_dom_sf"/>
</dbReference>
<dbReference type="InterPro" id="IPR007214">
    <property type="entry name" value="YbaK/aa-tRNA-synth-assoc-dom"/>
</dbReference>
<dbReference type="PANTHER" id="PTHR30411">
    <property type="entry name" value="CYTOPLASMIC PROTEIN"/>
    <property type="match status" value="1"/>
</dbReference>
<dbReference type="PANTHER" id="PTHR30411:SF9">
    <property type="entry name" value="MULTIFUNCTIONAL SER_THR-TRNA DEACYLASE PROXP-Y"/>
    <property type="match status" value="1"/>
</dbReference>
<dbReference type="Pfam" id="PF04073">
    <property type="entry name" value="tRNA_edit"/>
    <property type="match status" value="1"/>
</dbReference>
<dbReference type="SUPFAM" id="SSF55826">
    <property type="entry name" value="YbaK/ProRS associated domain"/>
    <property type="match status" value="1"/>
</dbReference>
<gene>
    <name evidence="2" type="primary">proXp-y</name>
    <name evidence="2" type="synonym">yeaK</name>
    <name type="ordered locus">b1787</name>
    <name type="ordered locus">JW1776</name>
</gene>
<name>PROXY_ECOLI</name>
<organism>
    <name type="scientific">Escherichia coli (strain K12)</name>
    <dbReference type="NCBI Taxonomy" id="83333"/>
    <lineage>
        <taxon>Bacteria</taxon>
        <taxon>Pseudomonadati</taxon>
        <taxon>Pseudomonadota</taxon>
        <taxon>Gammaproteobacteria</taxon>
        <taxon>Enterobacterales</taxon>
        <taxon>Enterobacteriaceae</taxon>
        <taxon>Escherichia</taxon>
    </lineage>
</organism>
<proteinExistence type="evidence at protein level"/>
<reference key="1">
    <citation type="journal article" date="1997" name="Science">
        <title>The complete genome sequence of Escherichia coli K-12.</title>
        <authorList>
            <person name="Blattner F.R."/>
            <person name="Plunkett G. III"/>
            <person name="Bloch C.A."/>
            <person name="Perna N.T."/>
            <person name="Burland V."/>
            <person name="Riley M."/>
            <person name="Collado-Vides J."/>
            <person name="Glasner J.D."/>
            <person name="Rode C.K."/>
            <person name="Mayhew G.F."/>
            <person name="Gregor J."/>
            <person name="Davis N.W."/>
            <person name="Kirkpatrick H.A."/>
            <person name="Goeden M.A."/>
            <person name="Rose D.J."/>
            <person name="Mau B."/>
            <person name="Shao Y."/>
        </authorList>
    </citation>
    <scope>NUCLEOTIDE SEQUENCE [LARGE SCALE GENOMIC DNA]</scope>
    <source>
        <strain>K12 / MG1655 / ATCC 47076</strain>
    </source>
</reference>
<reference key="2">
    <citation type="journal article" date="2006" name="Mol. Syst. Biol.">
        <title>Highly accurate genome sequences of Escherichia coli K-12 strains MG1655 and W3110.</title>
        <authorList>
            <person name="Hayashi K."/>
            <person name="Morooka N."/>
            <person name="Yamamoto Y."/>
            <person name="Fujita K."/>
            <person name="Isono K."/>
            <person name="Choi S."/>
            <person name="Ohtsubo E."/>
            <person name="Baba T."/>
            <person name="Wanner B.L."/>
            <person name="Mori H."/>
            <person name="Horiuchi T."/>
        </authorList>
    </citation>
    <scope>NUCLEOTIDE SEQUENCE [LARGE SCALE GENOMIC DNA]</scope>
    <source>
        <strain>K12 / W3110 / ATCC 27325 / DSM 5911</strain>
    </source>
</reference>
<reference key="3">
    <citation type="journal article" date="2015" name="Proc. Natl. Acad. Sci. U.S.A.">
        <title>Homologous trans-editing factors with broad tRNA specificity prevent mistranslation caused by serine/threonine misactivation.</title>
        <authorList>
            <person name="Liu Z."/>
            <person name="Vargas-Rodriguez O."/>
            <person name="Goto Y."/>
            <person name="Novoa E.M."/>
            <person name="Ribas de Pouplana L."/>
            <person name="Suga H."/>
            <person name="Musier-Forsyth K."/>
        </authorList>
    </citation>
    <scope>FUNCTION</scope>
    <scope>CATALYTIC ACTIVITY</scope>
    <scope>DISRUPTION PHENOTYPE</scope>
    <source>
        <strain evidence="2">K12 / BW25113</strain>
    </source>
</reference>
<keyword id="KW-0963">Cytoplasm</keyword>
<keyword id="KW-0378">Hydrolase</keyword>
<keyword id="KW-1185">Reference proteome</keyword>
<keyword id="KW-0694">RNA-binding</keyword>
<keyword id="KW-0820">tRNA-binding</keyword>